<name>PSRP_SHISS</name>
<feature type="chain" id="PRO_0000196713" description="Phosphoenolpyruvate synthase regulatory protein">
    <location>
        <begin position="1"/>
        <end position="277"/>
    </location>
</feature>
<feature type="binding site" evidence="1">
    <location>
        <begin position="157"/>
        <end position="164"/>
    </location>
    <ligand>
        <name>ADP</name>
        <dbReference type="ChEBI" id="CHEBI:456216"/>
    </ligand>
</feature>
<reference key="1">
    <citation type="journal article" date="2005" name="Nucleic Acids Res.">
        <title>Genome dynamics and diversity of Shigella species, the etiologic agents of bacillary dysentery.</title>
        <authorList>
            <person name="Yang F."/>
            <person name="Yang J."/>
            <person name="Zhang X."/>
            <person name="Chen L."/>
            <person name="Jiang Y."/>
            <person name="Yan Y."/>
            <person name="Tang X."/>
            <person name="Wang J."/>
            <person name="Xiong Z."/>
            <person name="Dong J."/>
            <person name="Xue Y."/>
            <person name="Zhu Y."/>
            <person name="Xu X."/>
            <person name="Sun L."/>
            <person name="Chen S."/>
            <person name="Nie H."/>
            <person name="Peng J."/>
            <person name="Xu J."/>
            <person name="Wang Y."/>
            <person name="Yuan Z."/>
            <person name="Wen Y."/>
            <person name="Yao Z."/>
            <person name="Shen Y."/>
            <person name="Qiang B."/>
            <person name="Hou Y."/>
            <person name="Yu J."/>
            <person name="Jin Q."/>
        </authorList>
    </citation>
    <scope>NUCLEOTIDE SEQUENCE [LARGE SCALE GENOMIC DNA]</scope>
    <source>
        <strain>Ss046</strain>
    </source>
</reference>
<accession>Q3Z250</accession>
<gene>
    <name evidence="1" type="primary">ppsR</name>
    <name type="ordered locus">SSON_1456</name>
</gene>
<organism>
    <name type="scientific">Shigella sonnei (strain Ss046)</name>
    <dbReference type="NCBI Taxonomy" id="300269"/>
    <lineage>
        <taxon>Bacteria</taxon>
        <taxon>Pseudomonadati</taxon>
        <taxon>Pseudomonadota</taxon>
        <taxon>Gammaproteobacteria</taxon>
        <taxon>Enterobacterales</taxon>
        <taxon>Enterobacteriaceae</taxon>
        <taxon>Shigella</taxon>
    </lineage>
</organism>
<evidence type="ECO:0000255" key="1">
    <source>
        <dbReference type="HAMAP-Rule" id="MF_01062"/>
    </source>
</evidence>
<keyword id="KW-0418">Kinase</keyword>
<keyword id="KW-0547">Nucleotide-binding</keyword>
<keyword id="KW-1185">Reference proteome</keyword>
<keyword id="KW-0723">Serine/threonine-protein kinase</keyword>
<keyword id="KW-0808">Transferase</keyword>
<sequence>MDNAVDRHVFYISDGTAITAEVLGHAVMSQFPVTISSITLPFVENESRARAVKDQIDAIYHQTGVRPLVFYSIVLPEIRAIILQSEGFCQDIVQALVAPLQQEMKLDPTPIAHRTHGLNPNNLNKYDARIAAIDYTLAHDDGISLRNLDQAQVILLGVSRCGKTPTSLYLAMQFGIRAANYPFIADDMDNLVLPASLKPLQHKLFGLTIDPERLAAIREERRENSRYASLRQCRMEVAEVEALYRKNQIPWINSTNYSVEEIATKILDIMGLSRRMY</sequence>
<proteinExistence type="inferred from homology"/>
<protein>
    <recommendedName>
        <fullName evidence="1">Phosphoenolpyruvate synthase regulatory protein</fullName>
        <shortName evidence="1">PEP synthase regulatory protein</shortName>
        <shortName evidence="1">PSRP</shortName>
        <ecNumber evidence="1">2.7.11.33</ecNumber>
        <ecNumber evidence="1">2.7.4.28</ecNumber>
    </recommendedName>
    <alternativeName>
        <fullName evidence="1">Pyruvate, water dikinase regulatory protein</fullName>
    </alternativeName>
</protein>
<dbReference type="EC" id="2.7.11.33" evidence="1"/>
<dbReference type="EC" id="2.7.4.28" evidence="1"/>
<dbReference type="EMBL" id="CP000038">
    <property type="protein sequence ID" value="AAZ88162.1"/>
    <property type="molecule type" value="Genomic_DNA"/>
</dbReference>
<dbReference type="RefSeq" id="WP_000368046.1">
    <property type="nucleotide sequence ID" value="NC_007384.1"/>
</dbReference>
<dbReference type="SMR" id="Q3Z250"/>
<dbReference type="GeneID" id="93775866"/>
<dbReference type="KEGG" id="ssn:SSON_1456"/>
<dbReference type="HOGENOM" id="CLU_046206_1_0_6"/>
<dbReference type="Proteomes" id="UP000002529">
    <property type="component" value="Chromosome"/>
</dbReference>
<dbReference type="GO" id="GO:0043531">
    <property type="term" value="F:ADP binding"/>
    <property type="evidence" value="ECO:0007669"/>
    <property type="project" value="UniProtKB-UniRule"/>
</dbReference>
<dbReference type="GO" id="GO:0005524">
    <property type="term" value="F:ATP binding"/>
    <property type="evidence" value="ECO:0007669"/>
    <property type="project" value="InterPro"/>
</dbReference>
<dbReference type="GO" id="GO:0016776">
    <property type="term" value="F:phosphotransferase activity, phosphate group as acceptor"/>
    <property type="evidence" value="ECO:0007669"/>
    <property type="project" value="UniProtKB-UniRule"/>
</dbReference>
<dbReference type="GO" id="GO:0004674">
    <property type="term" value="F:protein serine/threonine kinase activity"/>
    <property type="evidence" value="ECO:0007669"/>
    <property type="project" value="UniProtKB-UniRule"/>
</dbReference>
<dbReference type="HAMAP" id="MF_01062">
    <property type="entry name" value="PSRP"/>
    <property type="match status" value="1"/>
</dbReference>
<dbReference type="InterPro" id="IPR005177">
    <property type="entry name" value="Kinase-pyrophosphorylase"/>
</dbReference>
<dbReference type="InterPro" id="IPR026530">
    <property type="entry name" value="PSRP"/>
</dbReference>
<dbReference type="NCBIfam" id="NF003742">
    <property type="entry name" value="PRK05339.1"/>
    <property type="match status" value="1"/>
</dbReference>
<dbReference type="PANTHER" id="PTHR31756">
    <property type="entry name" value="PYRUVATE, PHOSPHATE DIKINASE REGULATORY PROTEIN 1, CHLOROPLASTIC"/>
    <property type="match status" value="1"/>
</dbReference>
<dbReference type="PANTHER" id="PTHR31756:SF3">
    <property type="entry name" value="PYRUVATE, PHOSPHATE DIKINASE REGULATORY PROTEIN 1, CHLOROPLASTIC"/>
    <property type="match status" value="1"/>
</dbReference>
<dbReference type="Pfam" id="PF03618">
    <property type="entry name" value="Kinase-PPPase"/>
    <property type="match status" value="1"/>
</dbReference>
<comment type="function">
    <text evidence="1">Bifunctional serine/threonine kinase and phosphorylase involved in the regulation of the phosphoenolpyruvate synthase (PEPS) by catalyzing its phosphorylation/dephosphorylation.</text>
</comment>
<comment type="catalytic activity">
    <reaction evidence="1">
        <text>[pyruvate, water dikinase] + ADP = [pyruvate, water dikinase]-phosphate + AMP + H(+)</text>
        <dbReference type="Rhea" id="RHEA:46020"/>
        <dbReference type="Rhea" id="RHEA-COMP:11425"/>
        <dbReference type="Rhea" id="RHEA-COMP:11426"/>
        <dbReference type="ChEBI" id="CHEBI:15378"/>
        <dbReference type="ChEBI" id="CHEBI:43176"/>
        <dbReference type="ChEBI" id="CHEBI:68546"/>
        <dbReference type="ChEBI" id="CHEBI:456215"/>
        <dbReference type="ChEBI" id="CHEBI:456216"/>
        <dbReference type="EC" id="2.7.11.33"/>
    </reaction>
</comment>
<comment type="catalytic activity">
    <reaction evidence="1">
        <text>[pyruvate, water dikinase]-phosphate + phosphate + H(+) = [pyruvate, water dikinase] + diphosphate</text>
        <dbReference type="Rhea" id="RHEA:48580"/>
        <dbReference type="Rhea" id="RHEA-COMP:11425"/>
        <dbReference type="Rhea" id="RHEA-COMP:11426"/>
        <dbReference type="ChEBI" id="CHEBI:15378"/>
        <dbReference type="ChEBI" id="CHEBI:33019"/>
        <dbReference type="ChEBI" id="CHEBI:43176"/>
        <dbReference type="ChEBI" id="CHEBI:43474"/>
        <dbReference type="ChEBI" id="CHEBI:68546"/>
        <dbReference type="EC" id="2.7.4.28"/>
    </reaction>
</comment>
<comment type="similarity">
    <text evidence="1">Belongs to the pyruvate, phosphate/water dikinase regulatory protein family. PSRP subfamily.</text>
</comment>